<name>LGT_AZOVD</name>
<feature type="chain" id="PRO_1000213649" description="Phosphatidylglycerol--prolipoprotein diacylglyceryl transferase">
    <location>
        <begin position="1"/>
        <end position="265"/>
    </location>
</feature>
<feature type="transmembrane region" description="Helical" evidence="1">
    <location>
        <begin position="10"/>
        <end position="30"/>
    </location>
</feature>
<feature type="transmembrane region" description="Helical" evidence="1">
    <location>
        <begin position="56"/>
        <end position="76"/>
    </location>
</feature>
<feature type="transmembrane region" description="Helical" evidence="1">
    <location>
        <begin position="87"/>
        <end position="107"/>
    </location>
</feature>
<feature type="transmembrane region" description="Helical" evidence="1">
    <location>
        <begin position="117"/>
        <end position="137"/>
    </location>
</feature>
<feature type="transmembrane region" description="Helical" evidence="1">
    <location>
        <begin position="172"/>
        <end position="192"/>
    </location>
</feature>
<feature type="transmembrane region" description="Helical" evidence="1">
    <location>
        <begin position="200"/>
        <end position="220"/>
    </location>
</feature>
<feature type="transmembrane region" description="Helical" evidence="1">
    <location>
        <begin position="227"/>
        <end position="247"/>
    </location>
</feature>
<feature type="binding site" evidence="1">
    <location>
        <position position="139"/>
    </location>
    <ligand>
        <name>a 1,2-diacyl-sn-glycero-3-phospho-(1'-sn-glycerol)</name>
        <dbReference type="ChEBI" id="CHEBI:64716"/>
    </ligand>
</feature>
<accession>C1DK17</accession>
<comment type="function">
    <text evidence="1">Catalyzes the transfer of the diacylglyceryl group from phosphatidylglycerol to the sulfhydryl group of the N-terminal cysteine of a prolipoprotein, the first step in the formation of mature lipoproteins.</text>
</comment>
<comment type="catalytic activity">
    <reaction evidence="1">
        <text>L-cysteinyl-[prolipoprotein] + a 1,2-diacyl-sn-glycero-3-phospho-(1'-sn-glycerol) = an S-1,2-diacyl-sn-glyceryl-L-cysteinyl-[prolipoprotein] + sn-glycerol 1-phosphate + H(+)</text>
        <dbReference type="Rhea" id="RHEA:56712"/>
        <dbReference type="Rhea" id="RHEA-COMP:14679"/>
        <dbReference type="Rhea" id="RHEA-COMP:14680"/>
        <dbReference type="ChEBI" id="CHEBI:15378"/>
        <dbReference type="ChEBI" id="CHEBI:29950"/>
        <dbReference type="ChEBI" id="CHEBI:57685"/>
        <dbReference type="ChEBI" id="CHEBI:64716"/>
        <dbReference type="ChEBI" id="CHEBI:140658"/>
        <dbReference type="EC" id="2.5.1.145"/>
    </reaction>
</comment>
<comment type="pathway">
    <text evidence="1">Protein modification; lipoprotein biosynthesis (diacylglyceryl transfer).</text>
</comment>
<comment type="subcellular location">
    <subcellularLocation>
        <location evidence="1">Cell inner membrane</location>
        <topology evidence="1">Multi-pass membrane protein</topology>
    </subcellularLocation>
</comment>
<comment type="similarity">
    <text evidence="1">Belongs to the Lgt family.</text>
</comment>
<sequence length="265" mass="29682">MLPYPQIDPVAIALGPLKVHWYGLMYLIGIGGAWWLAARRLAGFAPEWSREKLSDLVFWVALGVIAGGRLGYVLFYDLPAYLHDPSLILQVWRGGMSFHGGLLGVLLCSWIFARRNGKGFFELMDFIAPLVPIGLGAGRIGNFINAELWGKATDLPWAMIFPSDPQQLPRHPSQLYQFALEGVALFAILWFYSRRPRPTMAVSGLFALCYGIFRFIVEFVRVPDAQLGYLAFGWLTMGQLLCLPMILGGAGMMAWAYRREARLAH</sequence>
<organism>
    <name type="scientific">Azotobacter vinelandii (strain DJ / ATCC BAA-1303)</name>
    <dbReference type="NCBI Taxonomy" id="322710"/>
    <lineage>
        <taxon>Bacteria</taxon>
        <taxon>Pseudomonadati</taxon>
        <taxon>Pseudomonadota</taxon>
        <taxon>Gammaproteobacteria</taxon>
        <taxon>Pseudomonadales</taxon>
        <taxon>Pseudomonadaceae</taxon>
        <taxon>Azotobacter</taxon>
    </lineage>
</organism>
<keyword id="KW-0997">Cell inner membrane</keyword>
<keyword id="KW-1003">Cell membrane</keyword>
<keyword id="KW-0472">Membrane</keyword>
<keyword id="KW-0808">Transferase</keyword>
<keyword id="KW-0812">Transmembrane</keyword>
<keyword id="KW-1133">Transmembrane helix</keyword>
<evidence type="ECO:0000255" key="1">
    <source>
        <dbReference type="HAMAP-Rule" id="MF_01147"/>
    </source>
</evidence>
<dbReference type="EC" id="2.5.1.145" evidence="1"/>
<dbReference type="EMBL" id="CP001157">
    <property type="protein sequence ID" value="ACO80922.1"/>
    <property type="molecule type" value="Genomic_DNA"/>
</dbReference>
<dbReference type="RefSeq" id="WP_012703284.1">
    <property type="nucleotide sequence ID" value="NC_012560.1"/>
</dbReference>
<dbReference type="SMR" id="C1DK17"/>
<dbReference type="STRING" id="322710.Avin_48180"/>
<dbReference type="EnsemblBacteria" id="ACO80922">
    <property type="protein sequence ID" value="ACO80922"/>
    <property type="gene ID" value="Avin_48180"/>
</dbReference>
<dbReference type="GeneID" id="88187689"/>
<dbReference type="KEGG" id="avn:Avin_48180"/>
<dbReference type="eggNOG" id="COG0682">
    <property type="taxonomic scope" value="Bacteria"/>
</dbReference>
<dbReference type="HOGENOM" id="CLU_013386_1_0_6"/>
<dbReference type="OrthoDB" id="871140at2"/>
<dbReference type="UniPathway" id="UPA00664"/>
<dbReference type="Proteomes" id="UP000002424">
    <property type="component" value="Chromosome"/>
</dbReference>
<dbReference type="GO" id="GO:0005886">
    <property type="term" value="C:plasma membrane"/>
    <property type="evidence" value="ECO:0007669"/>
    <property type="project" value="UniProtKB-SubCell"/>
</dbReference>
<dbReference type="GO" id="GO:0008961">
    <property type="term" value="F:phosphatidylglycerol-prolipoprotein diacylglyceryl transferase activity"/>
    <property type="evidence" value="ECO:0007669"/>
    <property type="project" value="UniProtKB-UniRule"/>
</dbReference>
<dbReference type="GO" id="GO:0042158">
    <property type="term" value="P:lipoprotein biosynthetic process"/>
    <property type="evidence" value="ECO:0007669"/>
    <property type="project" value="UniProtKB-UniRule"/>
</dbReference>
<dbReference type="HAMAP" id="MF_01147">
    <property type="entry name" value="Lgt"/>
    <property type="match status" value="1"/>
</dbReference>
<dbReference type="InterPro" id="IPR001640">
    <property type="entry name" value="Lgt"/>
</dbReference>
<dbReference type="NCBIfam" id="TIGR00544">
    <property type="entry name" value="lgt"/>
    <property type="match status" value="1"/>
</dbReference>
<dbReference type="PANTHER" id="PTHR30589:SF0">
    <property type="entry name" value="PHOSPHATIDYLGLYCEROL--PROLIPOPROTEIN DIACYLGLYCERYL TRANSFERASE"/>
    <property type="match status" value="1"/>
</dbReference>
<dbReference type="PANTHER" id="PTHR30589">
    <property type="entry name" value="PROLIPOPROTEIN DIACYLGLYCERYL TRANSFERASE"/>
    <property type="match status" value="1"/>
</dbReference>
<dbReference type="Pfam" id="PF01790">
    <property type="entry name" value="LGT"/>
    <property type="match status" value="1"/>
</dbReference>
<dbReference type="PROSITE" id="PS01311">
    <property type="entry name" value="LGT"/>
    <property type="match status" value="1"/>
</dbReference>
<protein>
    <recommendedName>
        <fullName evidence="1">Phosphatidylglycerol--prolipoprotein diacylglyceryl transferase</fullName>
        <ecNumber evidence="1">2.5.1.145</ecNumber>
    </recommendedName>
</protein>
<reference key="1">
    <citation type="journal article" date="2009" name="J. Bacteriol.">
        <title>Genome sequence of Azotobacter vinelandii, an obligate aerobe specialized to support diverse anaerobic metabolic processes.</title>
        <authorList>
            <person name="Setubal J.C."/>
            <person name="Dos Santos P."/>
            <person name="Goldman B.S."/>
            <person name="Ertesvaag H."/>
            <person name="Espin G."/>
            <person name="Rubio L.M."/>
            <person name="Valla S."/>
            <person name="Almeida N.F."/>
            <person name="Balasubramanian D."/>
            <person name="Cromes L."/>
            <person name="Curatti L."/>
            <person name="Du Z."/>
            <person name="Godsy E."/>
            <person name="Goodner B."/>
            <person name="Hellner-Burris K."/>
            <person name="Hernandez J.A."/>
            <person name="Houmiel K."/>
            <person name="Imperial J."/>
            <person name="Kennedy C."/>
            <person name="Larson T.J."/>
            <person name="Latreille P."/>
            <person name="Ligon L.S."/>
            <person name="Lu J."/>
            <person name="Maerk M."/>
            <person name="Miller N.M."/>
            <person name="Norton S."/>
            <person name="O'Carroll I.P."/>
            <person name="Paulsen I."/>
            <person name="Raulfs E.C."/>
            <person name="Roemer R."/>
            <person name="Rosser J."/>
            <person name="Segura D."/>
            <person name="Slater S."/>
            <person name="Stricklin S.L."/>
            <person name="Studholme D.J."/>
            <person name="Sun J."/>
            <person name="Viana C.J."/>
            <person name="Wallin E."/>
            <person name="Wang B."/>
            <person name="Wheeler C."/>
            <person name="Zhu H."/>
            <person name="Dean D.R."/>
            <person name="Dixon R."/>
            <person name="Wood D."/>
        </authorList>
    </citation>
    <scope>NUCLEOTIDE SEQUENCE [LARGE SCALE GENOMIC DNA]</scope>
    <source>
        <strain>DJ / ATCC BAA-1303</strain>
    </source>
</reference>
<gene>
    <name evidence="1" type="primary">lgt</name>
    <name type="ordered locus">Avin_48180</name>
</gene>
<proteinExistence type="inferred from homology"/>